<feature type="chain" id="PRO_0000266459" description="Large ribosomal subunit protein uL14">
    <location>
        <begin position="1"/>
        <end position="122"/>
    </location>
</feature>
<evidence type="ECO:0000255" key="1">
    <source>
        <dbReference type="HAMAP-Rule" id="MF_01367"/>
    </source>
</evidence>
<evidence type="ECO:0000305" key="2"/>
<gene>
    <name evidence="1" type="primary">rplN</name>
    <name type="ordered locus">BR1223</name>
    <name type="ordered locus">BS1330_I1219</name>
</gene>
<keyword id="KW-0687">Ribonucleoprotein</keyword>
<keyword id="KW-0689">Ribosomal protein</keyword>
<keyword id="KW-0694">RNA-binding</keyword>
<keyword id="KW-0699">rRNA-binding</keyword>
<organism>
    <name type="scientific">Brucella suis biovar 1 (strain 1330)</name>
    <dbReference type="NCBI Taxonomy" id="204722"/>
    <lineage>
        <taxon>Bacteria</taxon>
        <taxon>Pseudomonadati</taxon>
        <taxon>Pseudomonadota</taxon>
        <taxon>Alphaproteobacteria</taxon>
        <taxon>Hyphomicrobiales</taxon>
        <taxon>Brucellaceae</taxon>
        <taxon>Brucella/Ochrobactrum group</taxon>
        <taxon>Brucella</taxon>
    </lineage>
</organism>
<reference key="1">
    <citation type="journal article" date="2002" name="Proc. Natl. Acad. Sci. U.S.A.">
        <title>The Brucella suis genome reveals fundamental similarities between animal and plant pathogens and symbionts.</title>
        <authorList>
            <person name="Paulsen I.T."/>
            <person name="Seshadri R."/>
            <person name="Nelson K.E."/>
            <person name="Eisen J.A."/>
            <person name="Heidelberg J.F."/>
            <person name="Read T.D."/>
            <person name="Dodson R.J."/>
            <person name="Umayam L.A."/>
            <person name="Brinkac L.M."/>
            <person name="Beanan M.J."/>
            <person name="Daugherty S.C."/>
            <person name="DeBoy R.T."/>
            <person name="Durkin A.S."/>
            <person name="Kolonay J.F."/>
            <person name="Madupu R."/>
            <person name="Nelson W.C."/>
            <person name="Ayodeji B."/>
            <person name="Kraul M."/>
            <person name="Shetty J."/>
            <person name="Malek J.A."/>
            <person name="Van Aken S.E."/>
            <person name="Riedmuller S."/>
            <person name="Tettelin H."/>
            <person name="Gill S.R."/>
            <person name="White O."/>
            <person name="Salzberg S.L."/>
            <person name="Hoover D.L."/>
            <person name="Lindler L.E."/>
            <person name="Halling S.M."/>
            <person name="Boyle S.M."/>
            <person name="Fraser C.M."/>
        </authorList>
    </citation>
    <scope>NUCLEOTIDE SEQUENCE [LARGE SCALE GENOMIC DNA]</scope>
    <source>
        <strain>1330</strain>
    </source>
</reference>
<reference key="2">
    <citation type="journal article" date="2011" name="J. Bacteriol.">
        <title>Revised genome sequence of Brucella suis 1330.</title>
        <authorList>
            <person name="Tae H."/>
            <person name="Shallom S."/>
            <person name="Settlage R."/>
            <person name="Preston D."/>
            <person name="Adams L.G."/>
            <person name="Garner H.R."/>
        </authorList>
    </citation>
    <scope>NUCLEOTIDE SEQUENCE [LARGE SCALE GENOMIC DNA]</scope>
    <source>
        <strain>1330</strain>
    </source>
</reference>
<protein>
    <recommendedName>
        <fullName evidence="1">Large ribosomal subunit protein uL14</fullName>
    </recommendedName>
    <alternativeName>
        <fullName evidence="2">50S ribosomal protein L14</fullName>
    </alternativeName>
</protein>
<name>RL14_BRUSU</name>
<dbReference type="EMBL" id="AE014291">
    <property type="protein sequence ID" value="AAN30142.1"/>
    <property type="molecule type" value="Genomic_DNA"/>
</dbReference>
<dbReference type="EMBL" id="CP002997">
    <property type="protein sequence ID" value="AEM18560.1"/>
    <property type="molecule type" value="Genomic_DNA"/>
</dbReference>
<dbReference type="PIR" id="AI3347">
    <property type="entry name" value="AI3347"/>
</dbReference>
<dbReference type="RefSeq" id="WP_004683923.1">
    <property type="nucleotide sequence ID" value="NZ_KN046804.1"/>
</dbReference>
<dbReference type="SMR" id="Q8G083"/>
<dbReference type="GeneID" id="97533534"/>
<dbReference type="KEGG" id="bms:BR1223"/>
<dbReference type="KEGG" id="bsi:BS1330_I1219"/>
<dbReference type="PATRIC" id="fig|204722.21.peg.2253"/>
<dbReference type="HOGENOM" id="CLU_095071_2_1_5"/>
<dbReference type="PhylomeDB" id="Q8G083"/>
<dbReference type="Proteomes" id="UP000007104">
    <property type="component" value="Chromosome I"/>
</dbReference>
<dbReference type="GO" id="GO:0022625">
    <property type="term" value="C:cytosolic large ribosomal subunit"/>
    <property type="evidence" value="ECO:0007669"/>
    <property type="project" value="TreeGrafter"/>
</dbReference>
<dbReference type="GO" id="GO:0070180">
    <property type="term" value="F:large ribosomal subunit rRNA binding"/>
    <property type="evidence" value="ECO:0007669"/>
    <property type="project" value="TreeGrafter"/>
</dbReference>
<dbReference type="GO" id="GO:0003735">
    <property type="term" value="F:structural constituent of ribosome"/>
    <property type="evidence" value="ECO:0007669"/>
    <property type="project" value="InterPro"/>
</dbReference>
<dbReference type="GO" id="GO:0006412">
    <property type="term" value="P:translation"/>
    <property type="evidence" value="ECO:0007669"/>
    <property type="project" value="UniProtKB-UniRule"/>
</dbReference>
<dbReference type="CDD" id="cd00337">
    <property type="entry name" value="Ribosomal_uL14"/>
    <property type="match status" value="1"/>
</dbReference>
<dbReference type="FunFam" id="2.40.150.20:FF:000001">
    <property type="entry name" value="50S ribosomal protein L14"/>
    <property type="match status" value="1"/>
</dbReference>
<dbReference type="Gene3D" id="2.40.150.20">
    <property type="entry name" value="Ribosomal protein L14"/>
    <property type="match status" value="1"/>
</dbReference>
<dbReference type="HAMAP" id="MF_01367">
    <property type="entry name" value="Ribosomal_uL14"/>
    <property type="match status" value="1"/>
</dbReference>
<dbReference type="InterPro" id="IPR000218">
    <property type="entry name" value="Ribosomal_uL14"/>
</dbReference>
<dbReference type="InterPro" id="IPR005745">
    <property type="entry name" value="Ribosomal_uL14_bac-type"/>
</dbReference>
<dbReference type="InterPro" id="IPR019972">
    <property type="entry name" value="Ribosomal_uL14_CS"/>
</dbReference>
<dbReference type="InterPro" id="IPR036853">
    <property type="entry name" value="Ribosomal_uL14_sf"/>
</dbReference>
<dbReference type="NCBIfam" id="TIGR01067">
    <property type="entry name" value="rplN_bact"/>
    <property type="match status" value="1"/>
</dbReference>
<dbReference type="PANTHER" id="PTHR11761">
    <property type="entry name" value="50S/60S RIBOSOMAL PROTEIN L14/L23"/>
    <property type="match status" value="1"/>
</dbReference>
<dbReference type="PANTHER" id="PTHR11761:SF3">
    <property type="entry name" value="LARGE RIBOSOMAL SUBUNIT PROTEIN UL14M"/>
    <property type="match status" value="1"/>
</dbReference>
<dbReference type="Pfam" id="PF00238">
    <property type="entry name" value="Ribosomal_L14"/>
    <property type="match status" value="1"/>
</dbReference>
<dbReference type="SMART" id="SM01374">
    <property type="entry name" value="Ribosomal_L14"/>
    <property type="match status" value="1"/>
</dbReference>
<dbReference type="SUPFAM" id="SSF50193">
    <property type="entry name" value="Ribosomal protein L14"/>
    <property type="match status" value="1"/>
</dbReference>
<dbReference type="PROSITE" id="PS00049">
    <property type="entry name" value="RIBOSOMAL_L14"/>
    <property type="match status" value="1"/>
</dbReference>
<accession>Q8G083</accession>
<accession>G0KAE4</accession>
<comment type="function">
    <text evidence="1">Binds to 23S rRNA. Forms part of two intersubunit bridges in the 70S ribosome.</text>
</comment>
<comment type="subunit">
    <text evidence="1">Part of the 50S ribosomal subunit. Forms a cluster with proteins L3 and L19. In the 70S ribosome, L14 and L19 interact and together make contacts with the 16S rRNA in bridges B5 and B8.</text>
</comment>
<comment type="similarity">
    <text evidence="1">Belongs to the universal ribosomal protein uL14 family.</text>
</comment>
<proteinExistence type="inferred from homology"/>
<sequence length="122" mass="13460">MIQMQTNLDVADNSGARRVMCIKVLGGSKRRYASVGDIIVVSIKEAIPRGRVKKGDVMKAVVVRTAKDIRRPDGSVIRFDNNAAVLIDNKKEPIGTRIFGPVPRELRAKNHMKIISLAPEVL</sequence>